<gene>
    <name type="primary">alr</name>
    <name type="ordered locus">MUL_0879</name>
</gene>
<name>ALR_MYCUA</name>
<comment type="function">
    <text evidence="1">Catalyzes the interconversion of L-alanine and D-alanine. May also act on other amino acids.</text>
</comment>
<comment type="catalytic activity">
    <reaction evidence="1">
        <text>L-alanine = D-alanine</text>
        <dbReference type="Rhea" id="RHEA:20249"/>
        <dbReference type="ChEBI" id="CHEBI:57416"/>
        <dbReference type="ChEBI" id="CHEBI:57972"/>
        <dbReference type="EC" id="5.1.1.1"/>
    </reaction>
</comment>
<comment type="cofactor">
    <cofactor evidence="1">
        <name>pyridoxal 5'-phosphate</name>
        <dbReference type="ChEBI" id="CHEBI:597326"/>
    </cofactor>
</comment>
<comment type="pathway">
    <text evidence="1">Amino-acid biosynthesis; D-alanine biosynthesis; D-alanine from L-alanine: step 1/1.</text>
</comment>
<comment type="similarity">
    <text evidence="1">Belongs to the alanine racemase family.</text>
</comment>
<dbReference type="EC" id="5.1.1.1" evidence="1"/>
<dbReference type="EMBL" id="CP000325">
    <property type="protein sequence ID" value="ABL03511.1"/>
    <property type="molecule type" value="Genomic_DNA"/>
</dbReference>
<dbReference type="RefSeq" id="WP_011739134.1">
    <property type="nucleotide sequence ID" value="NC_008611.1"/>
</dbReference>
<dbReference type="SMR" id="A0PME2"/>
<dbReference type="KEGG" id="mul:MUL_0879"/>
<dbReference type="eggNOG" id="COG0787">
    <property type="taxonomic scope" value="Bacteria"/>
</dbReference>
<dbReference type="HOGENOM" id="CLU_028393_0_0_11"/>
<dbReference type="UniPathway" id="UPA00042">
    <property type="reaction ID" value="UER00497"/>
</dbReference>
<dbReference type="Proteomes" id="UP000000765">
    <property type="component" value="Chromosome"/>
</dbReference>
<dbReference type="GO" id="GO:0005829">
    <property type="term" value="C:cytosol"/>
    <property type="evidence" value="ECO:0007669"/>
    <property type="project" value="TreeGrafter"/>
</dbReference>
<dbReference type="GO" id="GO:0008784">
    <property type="term" value="F:alanine racemase activity"/>
    <property type="evidence" value="ECO:0007669"/>
    <property type="project" value="UniProtKB-UniRule"/>
</dbReference>
<dbReference type="GO" id="GO:0030170">
    <property type="term" value="F:pyridoxal phosphate binding"/>
    <property type="evidence" value="ECO:0007669"/>
    <property type="project" value="UniProtKB-UniRule"/>
</dbReference>
<dbReference type="GO" id="GO:0030632">
    <property type="term" value="P:D-alanine biosynthetic process"/>
    <property type="evidence" value="ECO:0007669"/>
    <property type="project" value="UniProtKB-UniRule"/>
</dbReference>
<dbReference type="GO" id="GO:0009252">
    <property type="term" value="P:peptidoglycan biosynthetic process"/>
    <property type="evidence" value="ECO:0007669"/>
    <property type="project" value="TreeGrafter"/>
</dbReference>
<dbReference type="CDD" id="cd00430">
    <property type="entry name" value="PLPDE_III_AR"/>
    <property type="match status" value="1"/>
</dbReference>
<dbReference type="FunFam" id="2.40.37.10:FF:000015">
    <property type="entry name" value="Alanine racemase"/>
    <property type="match status" value="1"/>
</dbReference>
<dbReference type="FunFam" id="3.20.20.10:FF:000002">
    <property type="entry name" value="Alanine racemase"/>
    <property type="match status" value="1"/>
</dbReference>
<dbReference type="Gene3D" id="3.20.20.10">
    <property type="entry name" value="Alanine racemase"/>
    <property type="match status" value="1"/>
</dbReference>
<dbReference type="Gene3D" id="2.40.37.10">
    <property type="entry name" value="Lyase, Ornithine Decarboxylase, Chain A, domain 1"/>
    <property type="match status" value="1"/>
</dbReference>
<dbReference type="HAMAP" id="MF_01201">
    <property type="entry name" value="Ala_racemase"/>
    <property type="match status" value="1"/>
</dbReference>
<dbReference type="InterPro" id="IPR000821">
    <property type="entry name" value="Ala_racemase"/>
</dbReference>
<dbReference type="InterPro" id="IPR009006">
    <property type="entry name" value="Ala_racemase/Decarboxylase_C"/>
</dbReference>
<dbReference type="InterPro" id="IPR011079">
    <property type="entry name" value="Ala_racemase_C"/>
</dbReference>
<dbReference type="InterPro" id="IPR001608">
    <property type="entry name" value="Ala_racemase_N"/>
</dbReference>
<dbReference type="InterPro" id="IPR020622">
    <property type="entry name" value="Ala_racemase_pyridoxalP-BS"/>
</dbReference>
<dbReference type="InterPro" id="IPR029066">
    <property type="entry name" value="PLP-binding_barrel"/>
</dbReference>
<dbReference type="NCBIfam" id="TIGR00492">
    <property type="entry name" value="alr"/>
    <property type="match status" value="1"/>
</dbReference>
<dbReference type="PANTHER" id="PTHR30511">
    <property type="entry name" value="ALANINE RACEMASE"/>
    <property type="match status" value="1"/>
</dbReference>
<dbReference type="PANTHER" id="PTHR30511:SF0">
    <property type="entry name" value="ALANINE RACEMASE, CATABOLIC-RELATED"/>
    <property type="match status" value="1"/>
</dbReference>
<dbReference type="Pfam" id="PF00842">
    <property type="entry name" value="Ala_racemase_C"/>
    <property type="match status" value="1"/>
</dbReference>
<dbReference type="Pfam" id="PF01168">
    <property type="entry name" value="Ala_racemase_N"/>
    <property type="match status" value="1"/>
</dbReference>
<dbReference type="PRINTS" id="PR00992">
    <property type="entry name" value="ALARACEMASE"/>
</dbReference>
<dbReference type="SMART" id="SM01005">
    <property type="entry name" value="Ala_racemase_C"/>
    <property type="match status" value="1"/>
</dbReference>
<dbReference type="SUPFAM" id="SSF50621">
    <property type="entry name" value="Alanine racemase C-terminal domain-like"/>
    <property type="match status" value="1"/>
</dbReference>
<dbReference type="SUPFAM" id="SSF51419">
    <property type="entry name" value="PLP-binding barrel"/>
    <property type="match status" value="1"/>
</dbReference>
<dbReference type="PROSITE" id="PS00395">
    <property type="entry name" value="ALANINE_RACEMASE"/>
    <property type="match status" value="1"/>
</dbReference>
<organism>
    <name type="scientific">Mycobacterium ulcerans (strain Agy99)</name>
    <dbReference type="NCBI Taxonomy" id="362242"/>
    <lineage>
        <taxon>Bacteria</taxon>
        <taxon>Bacillati</taxon>
        <taxon>Actinomycetota</taxon>
        <taxon>Actinomycetes</taxon>
        <taxon>Mycobacteriales</taxon>
        <taxon>Mycobacteriaceae</taxon>
        <taxon>Mycobacterium</taxon>
        <taxon>Mycobacterium ulcerans group</taxon>
    </lineage>
</organism>
<sequence>MTTTPISLTPGVLAEAVVDLGAIAHNVRLLRERAGSAQVMAVVKADGYGHGATAVARTALAAGAVELGVASVDEALTLRADGITAPVLAWLHAPGMDFGPALAADVQIAISSIRQLDEALDAARRTGTTATVTVKIDTGLNRNGVAPALYPEMVTRLRQAVAEDAIRLRGLMTHMVHADAPEKPINDIQSQRFKQMLDHARDQGVRFEVAHLSNSSATMARPDLTLDLVRPGIAVYGLSPVPRLGDMGLVPAMTVKCAVALVKSVSAGEGVSYGHTWIAPHDTNVALLPIGYADGVFRSLGGRLEVLINGKRRPGVGRVCMDQFLVDLGPGPLDVAEGDEAILFGPGTRGEPTAQDWADLVGTIHYEVVTSPRGRITRVYREAETVER</sequence>
<feature type="chain" id="PRO_1000066013" description="Alanine racemase">
    <location>
        <begin position="1"/>
        <end position="388"/>
    </location>
</feature>
<feature type="active site" description="Proton acceptor; specific for D-alanine" evidence="1">
    <location>
        <position position="44"/>
    </location>
</feature>
<feature type="active site" description="Proton acceptor; specific for L-alanine" evidence="1">
    <location>
        <position position="273"/>
    </location>
</feature>
<feature type="binding site" evidence="1">
    <location>
        <position position="142"/>
    </location>
    <ligand>
        <name>substrate</name>
    </ligand>
</feature>
<feature type="binding site" evidence="1">
    <location>
        <position position="321"/>
    </location>
    <ligand>
        <name>substrate</name>
    </ligand>
</feature>
<feature type="modified residue" description="N6-(pyridoxal phosphate)lysine" evidence="1">
    <location>
        <position position="44"/>
    </location>
</feature>
<evidence type="ECO:0000255" key="1">
    <source>
        <dbReference type="HAMAP-Rule" id="MF_01201"/>
    </source>
</evidence>
<keyword id="KW-0413">Isomerase</keyword>
<keyword id="KW-0663">Pyridoxal phosphate</keyword>
<proteinExistence type="inferred from homology"/>
<protein>
    <recommendedName>
        <fullName evidence="1">Alanine racemase</fullName>
        <ecNumber evidence="1">5.1.1.1</ecNumber>
    </recommendedName>
</protein>
<reference key="1">
    <citation type="journal article" date="2007" name="Genome Res.">
        <title>Reductive evolution and niche adaptation inferred from the genome of Mycobacterium ulcerans, the causative agent of Buruli ulcer.</title>
        <authorList>
            <person name="Stinear T.P."/>
            <person name="Seemann T."/>
            <person name="Pidot S."/>
            <person name="Frigui W."/>
            <person name="Reysset G."/>
            <person name="Garnier T."/>
            <person name="Meurice G."/>
            <person name="Simon D."/>
            <person name="Bouchier C."/>
            <person name="Ma L."/>
            <person name="Tichit M."/>
            <person name="Porter J.L."/>
            <person name="Ryan J."/>
            <person name="Johnson P.D.R."/>
            <person name="Davies J.K."/>
            <person name="Jenkin G.A."/>
            <person name="Small P.L.C."/>
            <person name="Jones L.M."/>
            <person name="Tekaia F."/>
            <person name="Laval F."/>
            <person name="Daffe M."/>
            <person name="Parkhill J."/>
            <person name="Cole S.T."/>
        </authorList>
    </citation>
    <scope>NUCLEOTIDE SEQUENCE [LARGE SCALE GENOMIC DNA]</scope>
    <source>
        <strain>Agy99</strain>
    </source>
</reference>
<accession>A0PME2</accession>